<keyword id="KW-0963">Cytoplasm</keyword>
<keyword id="KW-0251">Elongation factor</keyword>
<keyword id="KW-0648">Protein biosynthesis</keyword>
<keyword id="KW-1185">Reference proteome</keyword>
<reference key="1">
    <citation type="journal article" date="2007" name="Nat. Biotechnol.">
        <title>Complete genome sequence of the fish pathogen Flavobacterium psychrophilum.</title>
        <authorList>
            <person name="Duchaud E."/>
            <person name="Boussaha M."/>
            <person name="Loux V."/>
            <person name="Bernardet J.-F."/>
            <person name="Michel C."/>
            <person name="Kerouault B."/>
            <person name="Mondot S."/>
            <person name="Nicolas P."/>
            <person name="Bossy R."/>
            <person name="Caron C."/>
            <person name="Bessieres P."/>
            <person name="Gibrat J.-F."/>
            <person name="Claverol S."/>
            <person name="Dumetz F."/>
            <person name="Le Henaff M."/>
            <person name="Benmansour A."/>
        </authorList>
    </citation>
    <scope>NUCLEOTIDE SEQUENCE [LARGE SCALE GENOMIC DNA]</scope>
    <source>
        <strain>ATCC 49511 / DSM 21280 / CIP 103535 / JIP02/86</strain>
    </source>
</reference>
<gene>
    <name evidence="1" type="primary">tsf</name>
    <name type="ordered locus">FP0453</name>
</gene>
<feature type="chain" id="PRO_1000006092" description="Elongation factor Ts">
    <location>
        <begin position="1"/>
        <end position="274"/>
    </location>
</feature>
<feature type="region of interest" description="Involved in Mg(2+) ion dislocation from EF-Tu" evidence="1">
    <location>
        <begin position="82"/>
        <end position="85"/>
    </location>
</feature>
<comment type="function">
    <text evidence="1">Associates with the EF-Tu.GDP complex and induces the exchange of GDP to GTP. It remains bound to the aminoacyl-tRNA.EF-Tu.GTP complex up to the GTP hydrolysis stage on the ribosome.</text>
</comment>
<comment type="subcellular location">
    <subcellularLocation>
        <location evidence="1">Cytoplasm</location>
    </subcellularLocation>
</comment>
<comment type="similarity">
    <text evidence="1">Belongs to the EF-Ts family.</text>
</comment>
<dbReference type="EMBL" id="AM398681">
    <property type="protein sequence ID" value="CAL42564.1"/>
    <property type="molecule type" value="Genomic_DNA"/>
</dbReference>
<dbReference type="RefSeq" id="WP_011962622.1">
    <property type="nucleotide sequence ID" value="NC_009613.3"/>
</dbReference>
<dbReference type="RefSeq" id="YP_001295382.1">
    <property type="nucleotide sequence ID" value="NC_009613.3"/>
</dbReference>
<dbReference type="SMR" id="A6GWU1"/>
<dbReference type="STRING" id="402612.FP0453"/>
<dbReference type="EnsemblBacteria" id="CAL42564">
    <property type="protein sequence ID" value="CAL42564"/>
    <property type="gene ID" value="FP0453"/>
</dbReference>
<dbReference type="KEGG" id="fps:FP0453"/>
<dbReference type="PATRIC" id="fig|402612.5.peg.468"/>
<dbReference type="eggNOG" id="COG0264">
    <property type="taxonomic scope" value="Bacteria"/>
</dbReference>
<dbReference type="HOGENOM" id="CLU_047155_0_0_10"/>
<dbReference type="OrthoDB" id="9808348at2"/>
<dbReference type="Proteomes" id="UP000006394">
    <property type="component" value="Chromosome"/>
</dbReference>
<dbReference type="GO" id="GO:0005737">
    <property type="term" value="C:cytoplasm"/>
    <property type="evidence" value="ECO:0007669"/>
    <property type="project" value="UniProtKB-SubCell"/>
</dbReference>
<dbReference type="GO" id="GO:0003746">
    <property type="term" value="F:translation elongation factor activity"/>
    <property type="evidence" value="ECO:0007669"/>
    <property type="project" value="UniProtKB-UniRule"/>
</dbReference>
<dbReference type="CDD" id="cd14275">
    <property type="entry name" value="UBA_EF-Ts"/>
    <property type="match status" value="1"/>
</dbReference>
<dbReference type="FunFam" id="1.10.8.10:FF:000001">
    <property type="entry name" value="Elongation factor Ts"/>
    <property type="match status" value="1"/>
</dbReference>
<dbReference type="Gene3D" id="1.10.286.20">
    <property type="match status" value="1"/>
</dbReference>
<dbReference type="Gene3D" id="1.10.8.10">
    <property type="entry name" value="DNA helicase RuvA subunit, C-terminal domain"/>
    <property type="match status" value="1"/>
</dbReference>
<dbReference type="Gene3D" id="3.30.479.20">
    <property type="entry name" value="Elongation factor Ts, dimerisation domain"/>
    <property type="match status" value="2"/>
</dbReference>
<dbReference type="HAMAP" id="MF_00050">
    <property type="entry name" value="EF_Ts"/>
    <property type="match status" value="1"/>
</dbReference>
<dbReference type="InterPro" id="IPR036402">
    <property type="entry name" value="EF-Ts_dimer_sf"/>
</dbReference>
<dbReference type="InterPro" id="IPR001816">
    <property type="entry name" value="Transl_elong_EFTs/EF1B"/>
</dbReference>
<dbReference type="InterPro" id="IPR014039">
    <property type="entry name" value="Transl_elong_EFTs/EF1B_dimer"/>
</dbReference>
<dbReference type="InterPro" id="IPR018101">
    <property type="entry name" value="Transl_elong_Ts_CS"/>
</dbReference>
<dbReference type="InterPro" id="IPR009060">
    <property type="entry name" value="UBA-like_sf"/>
</dbReference>
<dbReference type="NCBIfam" id="TIGR00116">
    <property type="entry name" value="tsf"/>
    <property type="match status" value="1"/>
</dbReference>
<dbReference type="PANTHER" id="PTHR11741">
    <property type="entry name" value="ELONGATION FACTOR TS"/>
    <property type="match status" value="1"/>
</dbReference>
<dbReference type="PANTHER" id="PTHR11741:SF0">
    <property type="entry name" value="ELONGATION FACTOR TS, MITOCHONDRIAL"/>
    <property type="match status" value="1"/>
</dbReference>
<dbReference type="Pfam" id="PF00889">
    <property type="entry name" value="EF_TS"/>
    <property type="match status" value="1"/>
</dbReference>
<dbReference type="SUPFAM" id="SSF54713">
    <property type="entry name" value="Elongation factor Ts (EF-Ts), dimerisation domain"/>
    <property type="match status" value="1"/>
</dbReference>
<dbReference type="SUPFAM" id="SSF46934">
    <property type="entry name" value="UBA-like"/>
    <property type="match status" value="1"/>
</dbReference>
<dbReference type="PROSITE" id="PS01126">
    <property type="entry name" value="EF_TS_1"/>
    <property type="match status" value="1"/>
</dbReference>
<evidence type="ECO:0000255" key="1">
    <source>
        <dbReference type="HAMAP-Rule" id="MF_00050"/>
    </source>
</evidence>
<accession>A6GWU1</accession>
<protein>
    <recommendedName>
        <fullName evidence="1">Elongation factor Ts</fullName>
        <shortName evidence="1">EF-Ts</shortName>
    </recommendedName>
</protein>
<organism>
    <name type="scientific">Flavobacterium psychrophilum (strain ATCC 49511 / DSM 21280 / CIP 103535 / JIP02/86)</name>
    <dbReference type="NCBI Taxonomy" id="402612"/>
    <lineage>
        <taxon>Bacteria</taxon>
        <taxon>Pseudomonadati</taxon>
        <taxon>Bacteroidota</taxon>
        <taxon>Flavobacteriia</taxon>
        <taxon>Flavobacteriales</taxon>
        <taxon>Flavobacteriaceae</taxon>
        <taxon>Flavobacterium</taxon>
    </lineage>
</organism>
<sequence length="274" mass="29443">MATITAADVNKLRTITGAGMMDCKKALVESDGDFDLAIENLRKKGQKVAANRSDRESTEGAAIAVVNADNTVGVVITLNCETDFVGMNENFVKMAVEMANLALNFNNKEEFLASDFNGITIADKLIEQTGVIGEKLEIRTFEKLEGAFVGSYIHSGNKIATLTAFSAKADGIEEAARNVAMQAAAMNPIALNEEGVDADTIAKEIEIAKDMLRAEGKPEAMIENIAKGKLGRFFKDNTLVNQDYIKDSSMSVANYVKSIDANLIVTGFKRAALG</sequence>
<name>EFTS_FLAPJ</name>
<proteinExistence type="inferred from homology"/>